<reference key="1">
    <citation type="journal article" date="1994" name="Nature">
        <title>Complete DNA sequence of yeast chromosome XI.</title>
        <authorList>
            <person name="Dujon B."/>
            <person name="Alexandraki D."/>
            <person name="Andre B."/>
            <person name="Ansorge W."/>
            <person name="Baladron V."/>
            <person name="Ballesta J.P.G."/>
            <person name="Banrevi A."/>
            <person name="Bolle P.-A."/>
            <person name="Bolotin-Fukuhara M."/>
            <person name="Bossier P."/>
            <person name="Bou G."/>
            <person name="Boyer J."/>
            <person name="Buitrago M.J."/>
            <person name="Cheret G."/>
            <person name="Colleaux L."/>
            <person name="Daignan-Fornier B."/>
            <person name="del Rey F."/>
            <person name="Dion C."/>
            <person name="Domdey H."/>
            <person name="Duesterhoeft A."/>
            <person name="Duesterhus S."/>
            <person name="Entian K.-D."/>
            <person name="Erfle H."/>
            <person name="Esteban P.F."/>
            <person name="Feldmann H."/>
            <person name="Fernandes L."/>
            <person name="Fobo G.M."/>
            <person name="Fritz C."/>
            <person name="Fukuhara H."/>
            <person name="Gabel C."/>
            <person name="Gaillon L."/>
            <person name="Garcia-Cantalejo J.M."/>
            <person name="Garcia-Ramirez J.J."/>
            <person name="Gent M.E."/>
            <person name="Ghazvini M."/>
            <person name="Goffeau A."/>
            <person name="Gonzalez A."/>
            <person name="Grothues D."/>
            <person name="Guerreiro P."/>
            <person name="Hegemann J.H."/>
            <person name="Hewitt N."/>
            <person name="Hilger F."/>
            <person name="Hollenberg C.P."/>
            <person name="Horaitis O."/>
            <person name="Indge K.J."/>
            <person name="Jacquier A."/>
            <person name="James C.M."/>
            <person name="Jauniaux J.-C."/>
            <person name="Jimenez A."/>
            <person name="Keuchel H."/>
            <person name="Kirchrath L."/>
            <person name="Kleine K."/>
            <person name="Koetter P."/>
            <person name="Legrain P."/>
            <person name="Liebl S."/>
            <person name="Louis E.J."/>
            <person name="Maia e Silva A."/>
            <person name="Marck C."/>
            <person name="Monnier A.-L."/>
            <person name="Moestl D."/>
            <person name="Mueller S."/>
            <person name="Obermaier B."/>
            <person name="Oliver S.G."/>
            <person name="Pallier C."/>
            <person name="Pascolo S."/>
            <person name="Pfeiffer F."/>
            <person name="Philippsen P."/>
            <person name="Planta R.J."/>
            <person name="Pohl F.M."/>
            <person name="Pohl T.M."/>
            <person name="Poehlmann R."/>
            <person name="Portetelle D."/>
            <person name="Purnelle B."/>
            <person name="Puzos V."/>
            <person name="Ramezani Rad M."/>
            <person name="Rasmussen S.W."/>
            <person name="Remacha M.A."/>
            <person name="Revuelta J.L."/>
            <person name="Richard G.-F."/>
            <person name="Rieger M."/>
            <person name="Rodrigues-Pousada C."/>
            <person name="Rose M."/>
            <person name="Rupp T."/>
            <person name="Santos M.A."/>
            <person name="Schwager C."/>
            <person name="Sensen C."/>
            <person name="Skala J."/>
            <person name="Soares H."/>
            <person name="Sor F."/>
            <person name="Stegemann J."/>
            <person name="Tettelin H."/>
            <person name="Thierry A."/>
            <person name="Tzermia M."/>
            <person name="Urrestarazu L.A."/>
            <person name="van Dyck L."/>
            <person name="van Vliet-Reedijk J.C."/>
            <person name="Valens M."/>
            <person name="Vandenbol M."/>
            <person name="Vilela C."/>
            <person name="Vissers S."/>
            <person name="von Wettstein D."/>
            <person name="Voss H."/>
            <person name="Wiemann S."/>
            <person name="Xu G."/>
            <person name="Zimmermann J."/>
            <person name="Haasemann M."/>
            <person name="Becker I."/>
            <person name="Mewes H.-W."/>
        </authorList>
    </citation>
    <scope>NUCLEOTIDE SEQUENCE [LARGE SCALE GENOMIC DNA]</scope>
    <source>
        <strain>ATCC 204508 / S288c</strain>
    </source>
</reference>
<reference key="2">
    <citation type="journal article" date="2014" name="G3 (Bethesda)">
        <title>The reference genome sequence of Saccharomyces cerevisiae: Then and now.</title>
        <authorList>
            <person name="Engel S.R."/>
            <person name="Dietrich F.S."/>
            <person name="Fisk D.G."/>
            <person name="Binkley G."/>
            <person name="Balakrishnan R."/>
            <person name="Costanzo M.C."/>
            <person name="Dwight S.S."/>
            <person name="Hitz B.C."/>
            <person name="Karra K."/>
            <person name="Nash R.S."/>
            <person name="Weng S."/>
            <person name="Wong E.D."/>
            <person name="Lloyd P."/>
            <person name="Skrzypek M.S."/>
            <person name="Miyasato S.R."/>
            <person name="Simison M."/>
            <person name="Cherry J.M."/>
        </authorList>
    </citation>
    <scope>GENOME REANNOTATION</scope>
    <source>
        <strain>ATCC 204508 / S288c</strain>
    </source>
</reference>
<reference key="3">
    <citation type="journal article" date="2003" name="Science">
        <title>Finding functional features in Saccharomyces genomes by phylogenetic footprinting.</title>
        <authorList>
            <person name="Cliften P.F."/>
            <person name="Sudarsanam P."/>
            <person name="Desikan A."/>
            <person name="Fulton L."/>
            <person name="Fulton B."/>
            <person name="Majors J."/>
            <person name="Waterston R."/>
            <person name="Cohen B.A."/>
            <person name="Johnston M."/>
        </authorList>
    </citation>
    <scope>GENOME REANNOTATION</scope>
</reference>
<reference key="4">
    <citation type="journal article" date="2018" name="J. Proteome Res.">
        <title>Enrichment-based proteogenomics identifies microproteins, missing proteins, and novel smORFs in Saccharomyces cerevisiae.</title>
        <authorList>
            <person name="He C."/>
            <person name="Jia C."/>
            <person name="Zhang Y."/>
            <person name="Xu P."/>
        </authorList>
    </citation>
    <scope>IDENTIFICATION BY MASS SPECTROMETRY</scope>
</reference>
<proteinExistence type="evidence at protein level"/>
<protein>
    <recommendedName>
        <fullName evidence="3">Uncharacterized protein YKL023C-A</fullName>
    </recommendedName>
</protein>
<dbReference type="EMBL" id="Z28024">
    <property type="status" value="NOT_ANNOTATED_CDS"/>
    <property type="molecule type" value="Genomic_DNA"/>
</dbReference>
<dbReference type="EMBL" id="BK006944">
    <property type="protein sequence ID" value="DAA09131.1"/>
    <property type="molecule type" value="Genomic_DNA"/>
</dbReference>
<dbReference type="BioGRID" id="531947">
    <property type="interactions" value="3"/>
</dbReference>
<dbReference type="FunCoup" id="Q2V2P3">
    <property type="interactions" value="1"/>
</dbReference>
<dbReference type="PaxDb" id="4932-YKL023C-A"/>
<dbReference type="PeptideAtlas" id="Q2V2P3"/>
<dbReference type="EnsemblFungi" id="YKL023C-A_mRNA">
    <property type="protein sequence ID" value="YKL023C-A"/>
    <property type="gene ID" value="YKL023C-A"/>
</dbReference>
<dbReference type="KEGG" id="sce:YKL023C-A"/>
<dbReference type="AGR" id="SGD:S000113559"/>
<dbReference type="SGD" id="S000113559">
    <property type="gene designation" value="YKL023C-A"/>
</dbReference>
<dbReference type="VEuPathDB" id="FungiDB:YKL023C-A"/>
<dbReference type="HOGENOM" id="CLU_2672496_0_0_1"/>
<dbReference type="InParanoid" id="Q2V2P3"/>
<dbReference type="OrthoDB" id="4065283at2759"/>
<dbReference type="BioCyc" id="YEAST:G3O-32103-MONOMER"/>
<dbReference type="BioGRID-ORCS" id="3799976">
    <property type="hits" value="10 hits in 10 CRISPR screens"/>
</dbReference>
<dbReference type="PRO" id="PR:Q2V2P3"/>
<dbReference type="Proteomes" id="UP000002311">
    <property type="component" value="Chromosome XI"/>
</dbReference>
<dbReference type="RNAct" id="Q2V2P3">
    <property type="molecule type" value="protein"/>
</dbReference>
<dbReference type="GO" id="GO:0016020">
    <property type="term" value="C:membrane"/>
    <property type="evidence" value="ECO:0007669"/>
    <property type="project" value="UniProtKB-SubCell"/>
</dbReference>
<dbReference type="Pfam" id="PF23521">
    <property type="entry name" value="YKL023C-A"/>
    <property type="match status" value="1"/>
</dbReference>
<organism>
    <name type="scientific">Saccharomyces cerevisiae (strain ATCC 204508 / S288c)</name>
    <name type="common">Baker's yeast</name>
    <dbReference type="NCBI Taxonomy" id="559292"/>
    <lineage>
        <taxon>Eukaryota</taxon>
        <taxon>Fungi</taxon>
        <taxon>Dikarya</taxon>
        <taxon>Ascomycota</taxon>
        <taxon>Saccharomycotina</taxon>
        <taxon>Saccharomycetes</taxon>
        <taxon>Saccharomycetales</taxon>
        <taxon>Saccharomycetaceae</taxon>
        <taxon>Saccharomyces</taxon>
    </lineage>
</organism>
<comment type="subcellular location">
    <subcellularLocation>
        <location evidence="1">Membrane</location>
        <topology evidence="1">Single-pass membrane protein</topology>
    </subcellularLocation>
</comment>
<feature type="chain" id="PRO_0000245423" description="Uncharacterized protein YKL023C-A">
    <location>
        <begin position="1"/>
        <end position="75"/>
    </location>
</feature>
<feature type="transmembrane region" description="Helical" evidence="1">
    <location>
        <begin position="47"/>
        <end position="66"/>
    </location>
</feature>
<feature type="region of interest" description="Disordered" evidence="2">
    <location>
        <begin position="19"/>
        <end position="42"/>
    </location>
</feature>
<feature type="compositionally biased region" description="Polar residues" evidence="2">
    <location>
        <begin position="19"/>
        <end position="38"/>
    </location>
</feature>
<gene>
    <name evidence="4" type="ordered locus">YKL023C-A</name>
</gene>
<accession>Q2V2P3</accession>
<accession>D6VXR1</accession>
<evidence type="ECO:0000255" key="1"/>
<evidence type="ECO:0000256" key="2">
    <source>
        <dbReference type="SAM" id="MobiDB-lite"/>
    </source>
</evidence>
<evidence type="ECO:0000305" key="3"/>
<evidence type="ECO:0000312" key="4">
    <source>
        <dbReference type="SGD" id="S000113559"/>
    </source>
</evidence>
<name>YK023_YEAST</name>
<keyword id="KW-0472">Membrane</keyword>
<keyword id="KW-1185">Reference proteome</keyword>
<keyword id="KW-0812">Transmembrane</keyword>
<keyword id="KW-1133">Transmembrane helix</keyword>
<sequence length="75" mass="8519">MNPRYRFILRFYSSKKPTFHNTAPSKTNVNVPRANKSQSKGKHKGKLLVLVGTLALVTSVISVNYQKNEPVEFLE</sequence>